<gene>
    <name evidence="1" type="primary">rpl7ae</name>
    <name type="ordered locus">Tneu_1580</name>
</gene>
<evidence type="ECO:0000255" key="1">
    <source>
        <dbReference type="HAMAP-Rule" id="MF_00326"/>
    </source>
</evidence>
<evidence type="ECO:0000305" key="2"/>
<organism>
    <name type="scientific">Pyrobaculum neutrophilum (strain DSM 2338 / JCM 9278 / NBRC 100436 / V24Sta)</name>
    <name type="common">Thermoproteus neutrophilus</name>
    <dbReference type="NCBI Taxonomy" id="444157"/>
    <lineage>
        <taxon>Archaea</taxon>
        <taxon>Thermoproteota</taxon>
        <taxon>Thermoprotei</taxon>
        <taxon>Thermoproteales</taxon>
        <taxon>Thermoproteaceae</taxon>
        <taxon>Pyrobaculum</taxon>
    </lineage>
</organism>
<accession>B1Y9V4</accession>
<feature type="chain" id="PRO_1000116098" description="Large ribosomal subunit protein eL8">
    <location>
        <begin position="1"/>
        <end position="151"/>
    </location>
</feature>
<sequence length="151" mass="15991">MAVTIDPKTFYANPPPGKPFYVRFEVPADVAEKALEVLSVAKQTGKIKKGTNEATKAVERGLAKLVLIAEDVDPPEVVAHLPLLCEEKKVPYVYVPSKEKLGKAAGINVSAAAAVVIEPGQAAGELEALVSKVNEIRAKNGLNAIPLPGRK</sequence>
<protein>
    <recommendedName>
        <fullName evidence="1">Large ribosomal subunit protein eL8</fullName>
    </recommendedName>
    <alternativeName>
        <fullName evidence="2">50S ribosomal protein L7Ae</fullName>
    </alternativeName>
    <alternativeName>
        <fullName evidence="1">Ribosomal protein L8e</fullName>
    </alternativeName>
</protein>
<proteinExistence type="inferred from homology"/>
<dbReference type="EMBL" id="CP001014">
    <property type="protein sequence ID" value="ACB40504.1"/>
    <property type="molecule type" value="Genomic_DNA"/>
</dbReference>
<dbReference type="RefSeq" id="WP_012350923.1">
    <property type="nucleotide sequence ID" value="NC_010525.1"/>
</dbReference>
<dbReference type="SMR" id="B1Y9V4"/>
<dbReference type="STRING" id="444157.Tneu_1580"/>
<dbReference type="GeneID" id="6166068"/>
<dbReference type="KEGG" id="tne:Tneu_1580"/>
<dbReference type="eggNOG" id="arCOG01751">
    <property type="taxonomic scope" value="Archaea"/>
</dbReference>
<dbReference type="HOGENOM" id="CLU_084513_4_0_2"/>
<dbReference type="OrthoDB" id="25810at2157"/>
<dbReference type="Proteomes" id="UP000001694">
    <property type="component" value="Chromosome"/>
</dbReference>
<dbReference type="GO" id="GO:0005737">
    <property type="term" value="C:cytoplasm"/>
    <property type="evidence" value="ECO:0007669"/>
    <property type="project" value="UniProtKB-SubCell"/>
</dbReference>
<dbReference type="GO" id="GO:1990904">
    <property type="term" value="C:ribonucleoprotein complex"/>
    <property type="evidence" value="ECO:0007669"/>
    <property type="project" value="UniProtKB-KW"/>
</dbReference>
<dbReference type="GO" id="GO:0005840">
    <property type="term" value="C:ribosome"/>
    <property type="evidence" value="ECO:0007669"/>
    <property type="project" value="UniProtKB-KW"/>
</dbReference>
<dbReference type="GO" id="GO:0004526">
    <property type="term" value="F:ribonuclease P activity"/>
    <property type="evidence" value="ECO:0007669"/>
    <property type="project" value="UniProtKB-UniRule"/>
</dbReference>
<dbReference type="GO" id="GO:0019843">
    <property type="term" value="F:rRNA binding"/>
    <property type="evidence" value="ECO:0007669"/>
    <property type="project" value="UniProtKB-KW"/>
</dbReference>
<dbReference type="GO" id="GO:0003735">
    <property type="term" value="F:structural constituent of ribosome"/>
    <property type="evidence" value="ECO:0007669"/>
    <property type="project" value="InterPro"/>
</dbReference>
<dbReference type="GO" id="GO:0042254">
    <property type="term" value="P:ribosome biogenesis"/>
    <property type="evidence" value="ECO:0007669"/>
    <property type="project" value="InterPro"/>
</dbReference>
<dbReference type="GO" id="GO:0006412">
    <property type="term" value="P:translation"/>
    <property type="evidence" value="ECO:0007669"/>
    <property type="project" value="UniProtKB-UniRule"/>
</dbReference>
<dbReference type="GO" id="GO:0001682">
    <property type="term" value="P:tRNA 5'-leader removal"/>
    <property type="evidence" value="ECO:0007669"/>
    <property type="project" value="UniProtKB-UniRule"/>
</dbReference>
<dbReference type="FunFam" id="3.30.1330.30:FF:000020">
    <property type="entry name" value="50S ribosomal protein L7Ae"/>
    <property type="match status" value="1"/>
</dbReference>
<dbReference type="Gene3D" id="3.30.1330.30">
    <property type="match status" value="1"/>
</dbReference>
<dbReference type="HAMAP" id="MF_00326">
    <property type="entry name" value="Ribosomal_eL8"/>
    <property type="match status" value="1"/>
</dbReference>
<dbReference type="InterPro" id="IPR050257">
    <property type="entry name" value="eL8/uL1-like"/>
</dbReference>
<dbReference type="InterPro" id="IPR029064">
    <property type="entry name" value="Ribosomal_eL30-like_sf"/>
</dbReference>
<dbReference type="InterPro" id="IPR004037">
    <property type="entry name" value="Ribosomal_eL8-like_CS"/>
</dbReference>
<dbReference type="InterPro" id="IPR004038">
    <property type="entry name" value="Ribosomal_eL8/eL30/eS12/Gad45"/>
</dbReference>
<dbReference type="InterPro" id="IPR018492">
    <property type="entry name" value="Ribosomal_eL8/Nhp2"/>
</dbReference>
<dbReference type="InterPro" id="IPR022481">
    <property type="entry name" value="Ribosomal_eL8_arc"/>
</dbReference>
<dbReference type="NCBIfam" id="TIGR03677">
    <property type="entry name" value="eL8_ribo"/>
    <property type="match status" value="1"/>
</dbReference>
<dbReference type="PANTHER" id="PTHR23105">
    <property type="entry name" value="RIBOSOMAL PROTEIN L7AE FAMILY MEMBER"/>
    <property type="match status" value="1"/>
</dbReference>
<dbReference type="Pfam" id="PF01248">
    <property type="entry name" value="Ribosomal_L7Ae"/>
    <property type="match status" value="1"/>
</dbReference>
<dbReference type="PRINTS" id="PR00881">
    <property type="entry name" value="L7ARS6FAMILY"/>
</dbReference>
<dbReference type="PRINTS" id="PR00884">
    <property type="entry name" value="RIBOSOMALHS6"/>
</dbReference>
<dbReference type="SUPFAM" id="SSF55315">
    <property type="entry name" value="L30e-like"/>
    <property type="match status" value="1"/>
</dbReference>
<dbReference type="PROSITE" id="PS01082">
    <property type="entry name" value="RIBOSOMAL_L7AE"/>
    <property type="match status" value="1"/>
</dbReference>
<name>RL7A_PYRNV</name>
<comment type="function">
    <text evidence="1">Multifunctional RNA-binding protein that recognizes the K-turn motif in ribosomal RNA, the RNA component of RNase P, box H/ACA, box C/D and box C'/D' sRNAs.</text>
</comment>
<comment type="subunit">
    <text evidence="1">Part of the 50S ribosomal subunit. Probably part of the RNase P complex.</text>
</comment>
<comment type="subcellular location">
    <subcellularLocation>
        <location evidence="1">Cytoplasm</location>
    </subcellularLocation>
</comment>
<comment type="similarity">
    <text evidence="1">Belongs to the eukaryotic ribosomal protein eL8 family.</text>
</comment>
<reference key="1">
    <citation type="submission" date="2008-03" db="EMBL/GenBank/DDBJ databases">
        <title>Complete sequence of Thermoproteus neutrophilus V24Sta.</title>
        <authorList>
            <consortium name="US DOE Joint Genome Institute"/>
            <person name="Copeland A."/>
            <person name="Lucas S."/>
            <person name="Lapidus A."/>
            <person name="Glavina del Rio T."/>
            <person name="Dalin E."/>
            <person name="Tice H."/>
            <person name="Bruce D."/>
            <person name="Goodwin L."/>
            <person name="Pitluck S."/>
            <person name="Sims D."/>
            <person name="Brettin T."/>
            <person name="Detter J.C."/>
            <person name="Han C."/>
            <person name="Kuske C.R."/>
            <person name="Schmutz J."/>
            <person name="Larimer F."/>
            <person name="Land M."/>
            <person name="Hauser L."/>
            <person name="Kyrpides N."/>
            <person name="Mikhailova N."/>
            <person name="Biddle J.F."/>
            <person name="Zhang Z."/>
            <person name="Fitz-Gibbon S.T."/>
            <person name="Lowe T.M."/>
            <person name="Saltikov C."/>
            <person name="House C.H."/>
            <person name="Richardson P."/>
        </authorList>
    </citation>
    <scope>NUCLEOTIDE SEQUENCE [LARGE SCALE GENOMIC DNA]</scope>
    <source>
        <strain>DSM 2338 / JCM 9278 / NBRC 100436 / V24Sta</strain>
    </source>
</reference>
<keyword id="KW-0963">Cytoplasm</keyword>
<keyword id="KW-0687">Ribonucleoprotein</keyword>
<keyword id="KW-0689">Ribosomal protein</keyword>
<keyword id="KW-0694">RNA-binding</keyword>
<keyword id="KW-0699">rRNA-binding</keyword>
<keyword id="KW-0819">tRNA processing</keyword>